<feature type="chain" id="PRO_0000160462" description="ATP-dependent Clp protease ATP-binding subunit ClpX">
    <location>
        <begin position="1"/>
        <end position="426"/>
    </location>
</feature>
<feature type="domain" description="ClpX-type ZB" evidence="2">
    <location>
        <begin position="6"/>
        <end position="59"/>
    </location>
</feature>
<feature type="binding site" evidence="2">
    <location>
        <position position="18"/>
    </location>
    <ligand>
        <name>Zn(2+)</name>
        <dbReference type="ChEBI" id="CHEBI:29105"/>
    </ligand>
</feature>
<feature type="binding site" evidence="2">
    <location>
        <position position="21"/>
    </location>
    <ligand>
        <name>Zn(2+)</name>
        <dbReference type="ChEBI" id="CHEBI:29105"/>
    </ligand>
</feature>
<feature type="binding site" evidence="2">
    <location>
        <position position="40"/>
    </location>
    <ligand>
        <name>Zn(2+)</name>
        <dbReference type="ChEBI" id="CHEBI:29105"/>
    </ligand>
</feature>
<feature type="binding site" evidence="2">
    <location>
        <position position="43"/>
    </location>
    <ligand>
        <name>Zn(2+)</name>
        <dbReference type="ChEBI" id="CHEBI:29105"/>
    </ligand>
</feature>
<feature type="binding site" evidence="1">
    <location>
        <begin position="122"/>
        <end position="129"/>
    </location>
    <ligand>
        <name>ATP</name>
        <dbReference type="ChEBI" id="CHEBI:30616"/>
    </ligand>
</feature>
<protein>
    <recommendedName>
        <fullName evidence="1">ATP-dependent Clp protease ATP-binding subunit ClpX</fullName>
    </recommendedName>
</protein>
<gene>
    <name evidence="1" type="primary">clpX</name>
    <name type="ordered locus">PD_0473</name>
</gene>
<reference key="1">
    <citation type="journal article" date="2003" name="J. Bacteriol.">
        <title>Comparative analyses of the complete genome sequences of Pierce's disease and citrus variegated chlorosis strains of Xylella fastidiosa.</title>
        <authorList>
            <person name="Van Sluys M.A."/>
            <person name="de Oliveira M.C."/>
            <person name="Monteiro-Vitorello C.B."/>
            <person name="Miyaki C.Y."/>
            <person name="Furlan L.R."/>
            <person name="Camargo L.E.A."/>
            <person name="da Silva A.C.R."/>
            <person name="Moon D.H."/>
            <person name="Takita M.A."/>
            <person name="Lemos E.G.M."/>
            <person name="Machado M.A."/>
            <person name="Ferro M.I.T."/>
            <person name="da Silva F.R."/>
            <person name="Goldman M.H.S."/>
            <person name="Goldman G.H."/>
            <person name="Lemos M.V.F."/>
            <person name="El-Dorry H."/>
            <person name="Tsai S.M."/>
            <person name="Carrer H."/>
            <person name="Carraro D.M."/>
            <person name="de Oliveira R.C."/>
            <person name="Nunes L.R."/>
            <person name="Siqueira W.J."/>
            <person name="Coutinho L.L."/>
            <person name="Kimura E.T."/>
            <person name="Ferro E.S."/>
            <person name="Harakava R."/>
            <person name="Kuramae E.E."/>
            <person name="Marino C.L."/>
            <person name="Giglioti E."/>
            <person name="Abreu I.L."/>
            <person name="Alves L.M.C."/>
            <person name="do Amaral A.M."/>
            <person name="Baia G.S."/>
            <person name="Blanco S.R."/>
            <person name="Brito M.S."/>
            <person name="Cannavan F.S."/>
            <person name="Celestino A.V."/>
            <person name="da Cunha A.F."/>
            <person name="Fenille R.C."/>
            <person name="Ferro J.A."/>
            <person name="Formighieri E.F."/>
            <person name="Kishi L.T."/>
            <person name="Leoni S.G."/>
            <person name="Oliveira A.R."/>
            <person name="Rosa V.E. Jr."/>
            <person name="Sassaki F.T."/>
            <person name="Sena J.A.D."/>
            <person name="de Souza A.A."/>
            <person name="Truffi D."/>
            <person name="Tsukumo F."/>
            <person name="Yanai G.M."/>
            <person name="Zaros L.G."/>
            <person name="Civerolo E.L."/>
            <person name="Simpson A.J.G."/>
            <person name="Almeida N.F. Jr."/>
            <person name="Setubal J.C."/>
            <person name="Kitajima J.P."/>
        </authorList>
    </citation>
    <scope>NUCLEOTIDE SEQUENCE [LARGE SCALE GENOMIC DNA]</scope>
    <source>
        <strain>Temecula1 / ATCC 700964</strain>
    </source>
</reference>
<proteinExistence type="inferred from homology"/>
<dbReference type="EMBL" id="AE009442">
    <property type="protein sequence ID" value="AAO28350.1"/>
    <property type="molecule type" value="Genomic_DNA"/>
</dbReference>
<dbReference type="RefSeq" id="WP_004090165.1">
    <property type="nucleotide sequence ID" value="NC_004556.1"/>
</dbReference>
<dbReference type="SMR" id="Q87E50"/>
<dbReference type="GeneID" id="93904176"/>
<dbReference type="KEGG" id="xft:PD_0473"/>
<dbReference type="HOGENOM" id="CLU_014218_8_2_6"/>
<dbReference type="Proteomes" id="UP000002516">
    <property type="component" value="Chromosome"/>
</dbReference>
<dbReference type="GO" id="GO:0009376">
    <property type="term" value="C:HslUV protease complex"/>
    <property type="evidence" value="ECO:0007669"/>
    <property type="project" value="TreeGrafter"/>
</dbReference>
<dbReference type="GO" id="GO:0005524">
    <property type="term" value="F:ATP binding"/>
    <property type="evidence" value="ECO:0007669"/>
    <property type="project" value="UniProtKB-UniRule"/>
</dbReference>
<dbReference type="GO" id="GO:0016887">
    <property type="term" value="F:ATP hydrolysis activity"/>
    <property type="evidence" value="ECO:0007669"/>
    <property type="project" value="InterPro"/>
</dbReference>
<dbReference type="GO" id="GO:0140662">
    <property type="term" value="F:ATP-dependent protein folding chaperone"/>
    <property type="evidence" value="ECO:0007669"/>
    <property type="project" value="InterPro"/>
</dbReference>
<dbReference type="GO" id="GO:0046983">
    <property type="term" value="F:protein dimerization activity"/>
    <property type="evidence" value="ECO:0007669"/>
    <property type="project" value="InterPro"/>
</dbReference>
<dbReference type="GO" id="GO:0051082">
    <property type="term" value="F:unfolded protein binding"/>
    <property type="evidence" value="ECO:0007669"/>
    <property type="project" value="UniProtKB-UniRule"/>
</dbReference>
<dbReference type="GO" id="GO:0008270">
    <property type="term" value="F:zinc ion binding"/>
    <property type="evidence" value="ECO:0007669"/>
    <property type="project" value="InterPro"/>
</dbReference>
<dbReference type="GO" id="GO:0051301">
    <property type="term" value="P:cell division"/>
    <property type="evidence" value="ECO:0007669"/>
    <property type="project" value="TreeGrafter"/>
</dbReference>
<dbReference type="GO" id="GO:0051603">
    <property type="term" value="P:proteolysis involved in protein catabolic process"/>
    <property type="evidence" value="ECO:0007669"/>
    <property type="project" value="TreeGrafter"/>
</dbReference>
<dbReference type="CDD" id="cd19497">
    <property type="entry name" value="RecA-like_ClpX"/>
    <property type="match status" value="1"/>
</dbReference>
<dbReference type="FunFam" id="1.10.8.60:FF:000002">
    <property type="entry name" value="ATP-dependent Clp protease ATP-binding subunit ClpX"/>
    <property type="match status" value="1"/>
</dbReference>
<dbReference type="FunFam" id="3.40.50.300:FF:000005">
    <property type="entry name" value="ATP-dependent Clp protease ATP-binding subunit ClpX"/>
    <property type="match status" value="1"/>
</dbReference>
<dbReference type="Gene3D" id="1.10.8.60">
    <property type="match status" value="1"/>
</dbReference>
<dbReference type="Gene3D" id="6.20.220.10">
    <property type="entry name" value="ClpX chaperone, C4-type zinc finger domain"/>
    <property type="match status" value="1"/>
</dbReference>
<dbReference type="Gene3D" id="3.40.50.300">
    <property type="entry name" value="P-loop containing nucleotide triphosphate hydrolases"/>
    <property type="match status" value="1"/>
</dbReference>
<dbReference type="HAMAP" id="MF_00175">
    <property type="entry name" value="ClpX"/>
    <property type="match status" value="1"/>
</dbReference>
<dbReference type="InterPro" id="IPR003593">
    <property type="entry name" value="AAA+_ATPase"/>
</dbReference>
<dbReference type="InterPro" id="IPR050052">
    <property type="entry name" value="ATP-dep_Clp_protease_ClpX"/>
</dbReference>
<dbReference type="InterPro" id="IPR003959">
    <property type="entry name" value="ATPase_AAA_core"/>
</dbReference>
<dbReference type="InterPro" id="IPR019489">
    <property type="entry name" value="Clp_ATPase_C"/>
</dbReference>
<dbReference type="InterPro" id="IPR004487">
    <property type="entry name" value="Clp_protease_ATP-bd_su_ClpX"/>
</dbReference>
<dbReference type="InterPro" id="IPR046425">
    <property type="entry name" value="ClpX_bact"/>
</dbReference>
<dbReference type="InterPro" id="IPR027417">
    <property type="entry name" value="P-loop_NTPase"/>
</dbReference>
<dbReference type="InterPro" id="IPR010603">
    <property type="entry name" value="Znf_CppX_C4"/>
</dbReference>
<dbReference type="InterPro" id="IPR038366">
    <property type="entry name" value="Znf_CppX_C4_sf"/>
</dbReference>
<dbReference type="NCBIfam" id="TIGR00382">
    <property type="entry name" value="clpX"/>
    <property type="match status" value="1"/>
</dbReference>
<dbReference type="NCBIfam" id="NF003745">
    <property type="entry name" value="PRK05342.1"/>
    <property type="match status" value="1"/>
</dbReference>
<dbReference type="PANTHER" id="PTHR48102:SF7">
    <property type="entry name" value="ATP-DEPENDENT CLP PROTEASE ATP-BINDING SUBUNIT CLPX-LIKE, MITOCHONDRIAL"/>
    <property type="match status" value="1"/>
</dbReference>
<dbReference type="PANTHER" id="PTHR48102">
    <property type="entry name" value="ATP-DEPENDENT CLP PROTEASE ATP-BINDING SUBUNIT CLPX-LIKE, MITOCHONDRIAL-RELATED"/>
    <property type="match status" value="1"/>
</dbReference>
<dbReference type="Pfam" id="PF07724">
    <property type="entry name" value="AAA_2"/>
    <property type="match status" value="1"/>
</dbReference>
<dbReference type="Pfam" id="PF10431">
    <property type="entry name" value="ClpB_D2-small"/>
    <property type="match status" value="1"/>
</dbReference>
<dbReference type="Pfam" id="PF06689">
    <property type="entry name" value="zf-C4_ClpX"/>
    <property type="match status" value="1"/>
</dbReference>
<dbReference type="SMART" id="SM00382">
    <property type="entry name" value="AAA"/>
    <property type="match status" value="1"/>
</dbReference>
<dbReference type="SMART" id="SM01086">
    <property type="entry name" value="ClpB_D2-small"/>
    <property type="match status" value="1"/>
</dbReference>
<dbReference type="SMART" id="SM00994">
    <property type="entry name" value="zf-C4_ClpX"/>
    <property type="match status" value="1"/>
</dbReference>
<dbReference type="SUPFAM" id="SSF57716">
    <property type="entry name" value="Glucocorticoid receptor-like (DNA-binding domain)"/>
    <property type="match status" value="1"/>
</dbReference>
<dbReference type="SUPFAM" id="SSF52540">
    <property type="entry name" value="P-loop containing nucleoside triphosphate hydrolases"/>
    <property type="match status" value="1"/>
</dbReference>
<dbReference type="PROSITE" id="PS51902">
    <property type="entry name" value="CLPX_ZB"/>
    <property type="match status" value="1"/>
</dbReference>
<accession>Q87E50</accession>
<name>CLPX_XYLFT</name>
<organism>
    <name type="scientific">Xylella fastidiosa (strain Temecula1 / ATCC 700964)</name>
    <dbReference type="NCBI Taxonomy" id="183190"/>
    <lineage>
        <taxon>Bacteria</taxon>
        <taxon>Pseudomonadati</taxon>
        <taxon>Pseudomonadota</taxon>
        <taxon>Gammaproteobacteria</taxon>
        <taxon>Lysobacterales</taxon>
        <taxon>Lysobacteraceae</taxon>
        <taxon>Xylella</taxon>
    </lineage>
</organism>
<sequence length="426" mass="47129">MSEDRQSRSGDGNKILYCSFCGKSQREVRKLIAGPSVFICDECVELCNDIIREELEEKSQSARSSLPKPKEILEVLDQYVIGQQRAKRTLAVAVYNHYKRIESRHKNDDIELAKSNILLVGPTGSGKTLLAETLARLLNVPFTIADATTLTEAGYVGEDVENIIQKLLHKCDYDVEKAQHGIVYIDEIDKISRKSENPSITRDVSGEGVQQALLKLIEGTVASVPPQGGRKHPQQEFLQVDTKNILFICGGAFAGLDKVIQQRCNEVGGIGFGVKVKSSESKRDVGKVLAGVEPEDLIKFGLIPEFVGRLPVVATLDELDESALVKILTEPKNAITKQFKKLFEMENVELEFRQDALSAVARKALKRKTGARGLRTIVELVLLDTMYELPSQEGISKVVVDESVIENKSEPYLIYQTMPAKVASGE</sequence>
<keyword id="KW-0067">ATP-binding</keyword>
<keyword id="KW-0143">Chaperone</keyword>
<keyword id="KW-0479">Metal-binding</keyword>
<keyword id="KW-0547">Nucleotide-binding</keyword>
<keyword id="KW-1185">Reference proteome</keyword>
<keyword id="KW-0862">Zinc</keyword>
<evidence type="ECO:0000255" key="1">
    <source>
        <dbReference type="HAMAP-Rule" id="MF_00175"/>
    </source>
</evidence>
<evidence type="ECO:0000255" key="2">
    <source>
        <dbReference type="PROSITE-ProRule" id="PRU01250"/>
    </source>
</evidence>
<comment type="function">
    <text evidence="1">ATP-dependent specificity component of the Clp protease. It directs the protease to specific substrates. Can perform chaperone functions in the absence of ClpP.</text>
</comment>
<comment type="subunit">
    <text evidence="1">Component of the ClpX-ClpP complex. Forms a hexameric ring that, in the presence of ATP, binds to fourteen ClpP subunits assembled into a disk-like structure with a central cavity, resembling the structure of eukaryotic proteasomes.</text>
</comment>
<comment type="similarity">
    <text evidence="1">Belongs to the ClpX chaperone family.</text>
</comment>